<name>GDF7_CHLAE</name>
<evidence type="ECO:0000250" key="1"/>
<evidence type="ECO:0000255" key="2"/>
<evidence type="ECO:0000256" key="3">
    <source>
        <dbReference type="SAM" id="MobiDB-lite"/>
    </source>
</evidence>
<evidence type="ECO:0000269" key="4">
    <source>
    </source>
</evidence>
<evidence type="ECO:0000305" key="5"/>
<organism>
    <name type="scientific">Chlorocebus aethiops</name>
    <name type="common">Green monkey</name>
    <name type="synonym">Cercopithecus aethiops</name>
    <dbReference type="NCBI Taxonomy" id="9534"/>
    <lineage>
        <taxon>Eukaryota</taxon>
        <taxon>Metazoa</taxon>
        <taxon>Chordata</taxon>
        <taxon>Craniata</taxon>
        <taxon>Vertebrata</taxon>
        <taxon>Euteleostomi</taxon>
        <taxon>Mammalia</taxon>
        <taxon>Eutheria</taxon>
        <taxon>Euarchontoglires</taxon>
        <taxon>Primates</taxon>
        <taxon>Haplorrhini</taxon>
        <taxon>Catarrhini</taxon>
        <taxon>Cercopithecidae</taxon>
        <taxon>Cercopithecinae</taxon>
        <taxon>Chlorocebus</taxon>
    </lineage>
</organism>
<proteinExistence type="evidence at transcript level"/>
<gene>
    <name type="primary">GDF7</name>
</gene>
<comment type="function">
    <text>May play an active role in the motor area of the primate neocortex.</text>
</comment>
<comment type="subunit">
    <text evidence="1">Homodimer; disulfide-linked.</text>
</comment>
<comment type="subcellular location">
    <subcellularLocation>
        <location evidence="1">Secreted</location>
    </subcellularLocation>
</comment>
<comment type="tissue specificity">
    <text evidence="4">Highly expressed in the primary aera of brain neocortex.</text>
</comment>
<comment type="similarity">
    <text evidence="5">Belongs to the TGF-beta family.</text>
</comment>
<feature type="signal peptide" evidence="2">
    <location>
        <begin position="1"/>
        <end position="19"/>
    </location>
</feature>
<feature type="propeptide" id="PRO_0000033920" evidence="2">
    <location>
        <begin position="20"/>
        <end position="318"/>
    </location>
</feature>
<feature type="chain" id="PRO_0000033921" description="Growth/differentiation factor 7">
    <location>
        <begin position="319"/>
        <end position="447"/>
    </location>
</feature>
<feature type="region of interest" description="Disordered" evidence="3">
    <location>
        <begin position="292"/>
        <end position="346"/>
    </location>
</feature>
<feature type="compositionally biased region" description="Basic residues" evidence="3">
    <location>
        <begin position="337"/>
        <end position="346"/>
    </location>
</feature>
<feature type="glycosylation site" description="N-linked (GlcNAc...) asparagine" evidence="2">
    <location>
        <position position="80"/>
    </location>
</feature>
<feature type="disulfide bond" evidence="1">
    <location>
        <begin position="346"/>
        <end position="412"/>
    </location>
</feature>
<feature type="disulfide bond" evidence="1">
    <location>
        <begin position="375"/>
        <end position="444"/>
    </location>
</feature>
<feature type="disulfide bond" evidence="1">
    <location>
        <begin position="379"/>
        <end position="446"/>
    </location>
</feature>
<feature type="disulfide bond" description="Interchain" evidence="1">
    <location>
        <position position="411"/>
    </location>
</feature>
<reference key="1">
    <citation type="journal article" date="2001" name="J. Neurochem.">
        <title>Growth/differentiation factor 7 is preferentially expressed in the primary motor area of the monkey neocortex.</title>
        <authorList>
            <person name="Watakabe A."/>
            <person name="Fujita H."/>
            <person name="Hayashi M."/>
            <person name="Yamamori T."/>
        </authorList>
    </citation>
    <scope>NUCLEOTIDE SEQUENCE [GENOMIC DNA]</scope>
    <scope>TISSUE SPECIFICITY</scope>
</reference>
<sequence length="447" mass="46866">MDLSAAAALCLWLLSACRPRDGLEAAAVLRAAGAGPVRSPGGGGGGGRTLAQAAGAAAVPAAAVSRARAPRRAAGSGFRNGSVVPHHFMMSLYRSLAGRAPAGAVAVSSSGHGRADTITGFTDQATQDESAAETGQSFLFDVSSLNDADEVVGAELRVLRRGSPEPGPGSSTSPPLLLLSTCPGAARAPRLLYSRAAEPLVGQRWEVFDVADAMRRHRREPRPPRAFCLLLRAVTGPVRSPLALRRLGFGWPGGGGSAPEERALLVVSSRTQRKESLFREMRAQARALGAALAAQPPPDPGTGTGSPRAVTAGRRRRRTALAGTRTAQGSGGGAGRGHGRRGRSRCSRKPLHVDFKELGWDDWIIAPLDYEAYHCEGVCDFPLRSHLEPTNHAIIQTLLNSMAPDAAPASCCVPARLSPISILYIDAANNVVYKQYEDMVVEACGCR</sequence>
<dbReference type="EMBL" id="AF254569">
    <property type="protein sequence ID" value="AAK30842.1"/>
    <property type="molecule type" value="Genomic_DNA"/>
</dbReference>
<dbReference type="EMBL" id="AF254568">
    <property type="protein sequence ID" value="AAK30842.1"/>
    <property type="status" value="JOINED"/>
    <property type="molecule type" value="Genomic_DNA"/>
</dbReference>
<dbReference type="SMR" id="Q9BDW8"/>
<dbReference type="GlyCosmos" id="Q9BDW8">
    <property type="glycosylation" value="1 site, No reported glycans"/>
</dbReference>
<dbReference type="GO" id="GO:0005615">
    <property type="term" value="C:extracellular space"/>
    <property type="evidence" value="ECO:0007669"/>
    <property type="project" value="UniProtKB-KW"/>
</dbReference>
<dbReference type="GO" id="GO:0005125">
    <property type="term" value="F:cytokine activity"/>
    <property type="evidence" value="ECO:0007669"/>
    <property type="project" value="UniProtKB-KW"/>
</dbReference>
<dbReference type="GO" id="GO:0008083">
    <property type="term" value="F:growth factor activity"/>
    <property type="evidence" value="ECO:0007669"/>
    <property type="project" value="UniProtKB-KW"/>
</dbReference>
<dbReference type="GO" id="GO:0030509">
    <property type="term" value="P:BMP signaling pathway"/>
    <property type="evidence" value="ECO:0007669"/>
    <property type="project" value="TreeGrafter"/>
</dbReference>
<dbReference type="CDD" id="cd13766">
    <property type="entry name" value="TGF_beta_GDF5_6_7"/>
    <property type="match status" value="1"/>
</dbReference>
<dbReference type="FunFam" id="2.10.90.10:FF:000001">
    <property type="entry name" value="Bone morphogenetic protein 4"/>
    <property type="match status" value="1"/>
</dbReference>
<dbReference type="FunFam" id="2.60.120.970:FF:000032">
    <property type="entry name" value="Growth differentiation factor 7"/>
    <property type="match status" value="1"/>
</dbReference>
<dbReference type="Gene3D" id="2.60.120.970">
    <property type="match status" value="1"/>
</dbReference>
<dbReference type="Gene3D" id="2.10.90.10">
    <property type="entry name" value="Cystine-knot cytokines"/>
    <property type="match status" value="1"/>
</dbReference>
<dbReference type="InterPro" id="IPR029034">
    <property type="entry name" value="Cystine-knot_cytokine"/>
</dbReference>
<dbReference type="InterPro" id="IPR001839">
    <property type="entry name" value="TGF-b_C"/>
</dbReference>
<dbReference type="InterPro" id="IPR001111">
    <property type="entry name" value="TGF-b_propeptide"/>
</dbReference>
<dbReference type="InterPro" id="IPR015615">
    <property type="entry name" value="TGF-beta-rel"/>
</dbReference>
<dbReference type="InterPro" id="IPR017948">
    <property type="entry name" value="TGFb_CS"/>
</dbReference>
<dbReference type="PANTHER" id="PTHR11848:SF160">
    <property type="entry name" value="GROWTH_DIFFERENTIATION FACTOR 7"/>
    <property type="match status" value="1"/>
</dbReference>
<dbReference type="PANTHER" id="PTHR11848">
    <property type="entry name" value="TGF-BETA FAMILY"/>
    <property type="match status" value="1"/>
</dbReference>
<dbReference type="Pfam" id="PF00019">
    <property type="entry name" value="TGF_beta"/>
    <property type="match status" value="1"/>
</dbReference>
<dbReference type="Pfam" id="PF00688">
    <property type="entry name" value="TGFb_propeptide"/>
    <property type="match status" value="1"/>
</dbReference>
<dbReference type="SMART" id="SM00204">
    <property type="entry name" value="TGFB"/>
    <property type="match status" value="1"/>
</dbReference>
<dbReference type="SUPFAM" id="SSF57501">
    <property type="entry name" value="Cystine-knot cytokines"/>
    <property type="match status" value="1"/>
</dbReference>
<dbReference type="PROSITE" id="PS00250">
    <property type="entry name" value="TGF_BETA_1"/>
    <property type="match status" value="1"/>
</dbReference>
<dbReference type="PROSITE" id="PS51362">
    <property type="entry name" value="TGF_BETA_2"/>
    <property type="match status" value="1"/>
</dbReference>
<protein>
    <recommendedName>
        <fullName>Growth/differentiation factor 7</fullName>
        <shortName>GDF-7</shortName>
    </recommendedName>
</protein>
<accession>Q9BDW8</accession>
<keyword id="KW-0165">Cleavage on pair of basic residues</keyword>
<keyword id="KW-0202">Cytokine</keyword>
<keyword id="KW-1015">Disulfide bond</keyword>
<keyword id="KW-0325">Glycoprotein</keyword>
<keyword id="KW-0339">Growth factor</keyword>
<keyword id="KW-0964">Secreted</keyword>
<keyword id="KW-0732">Signal</keyword>